<comment type="function">
    <text evidence="1">May play a role in photosystem I and II biogenesis.</text>
</comment>
<comment type="subcellular location">
    <subcellularLocation>
        <location evidence="1">Cellular thylakoid membrane</location>
        <topology evidence="1">Single-pass membrane protein</topology>
    </subcellularLocation>
</comment>
<comment type="similarity">
    <text evidence="1">Belongs to the PsbN family.</text>
</comment>
<comment type="caution">
    <text evidence="1">Originally thought to be a component of PSII; based on experiments in Synechocystis, N.tabacum and barley, and its absence from PSII in T.elongatus and T.vulcanus, this is probably not true.</text>
</comment>
<accession>Q8YYK1</accession>
<protein>
    <recommendedName>
        <fullName evidence="1">Protein PsbN</fullName>
    </recommendedName>
</protein>
<name>PSBN_NOSS1</name>
<feature type="chain" id="PRO_0000207973" description="Protein PsbN">
    <location>
        <begin position="1"/>
        <end position="43"/>
    </location>
</feature>
<feature type="transmembrane region" description="Helical" evidence="1">
    <location>
        <begin position="4"/>
        <end position="24"/>
    </location>
</feature>
<sequence>MEPAIVLIISVGAALVAVTGYGIYTAFGPPSRELSDPFEDHED</sequence>
<evidence type="ECO:0000255" key="1">
    <source>
        <dbReference type="HAMAP-Rule" id="MF_00293"/>
    </source>
</evidence>
<gene>
    <name evidence="1" type="primary">psbN</name>
    <name type="ordered locus">asr0847</name>
</gene>
<proteinExistence type="inferred from homology"/>
<keyword id="KW-0472">Membrane</keyword>
<keyword id="KW-1185">Reference proteome</keyword>
<keyword id="KW-0793">Thylakoid</keyword>
<keyword id="KW-0812">Transmembrane</keyword>
<keyword id="KW-1133">Transmembrane helix</keyword>
<reference key="1">
    <citation type="journal article" date="2001" name="DNA Res.">
        <title>Complete genomic sequence of the filamentous nitrogen-fixing cyanobacterium Anabaena sp. strain PCC 7120.</title>
        <authorList>
            <person name="Kaneko T."/>
            <person name="Nakamura Y."/>
            <person name="Wolk C.P."/>
            <person name="Kuritz T."/>
            <person name="Sasamoto S."/>
            <person name="Watanabe A."/>
            <person name="Iriguchi M."/>
            <person name="Ishikawa A."/>
            <person name="Kawashima K."/>
            <person name="Kimura T."/>
            <person name="Kishida Y."/>
            <person name="Kohara M."/>
            <person name="Matsumoto M."/>
            <person name="Matsuno A."/>
            <person name="Muraki A."/>
            <person name="Nakazaki N."/>
            <person name="Shimpo S."/>
            <person name="Sugimoto M."/>
            <person name="Takazawa M."/>
            <person name="Yamada M."/>
            <person name="Yasuda M."/>
            <person name="Tabata S."/>
        </authorList>
    </citation>
    <scope>NUCLEOTIDE SEQUENCE [LARGE SCALE GENOMIC DNA]</scope>
    <source>
        <strain>PCC 7120 / SAG 25.82 / UTEX 2576</strain>
    </source>
</reference>
<dbReference type="EMBL" id="BA000019">
    <property type="protein sequence ID" value="BAB72804.1"/>
    <property type="molecule type" value="Genomic_DNA"/>
</dbReference>
<dbReference type="PIR" id="AE1912">
    <property type="entry name" value="AE1912"/>
</dbReference>
<dbReference type="RefSeq" id="WP_010995021.1">
    <property type="nucleotide sequence ID" value="NZ_RSCN01000006.1"/>
</dbReference>
<dbReference type="SMR" id="Q8YYK1"/>
<dbReference type="STRING" id="103690.gene:10492859"/>
<dbReference type="GeneID" id="58722020"/>
<dbReference type="KEGG" id="ana:asr0847"/>
<dbReference type="eggNOG" id="ENOG50339MH">
    <property type="taxonomic scope" value="Bacteria"/>
</dbReference>
<dbReference type="OrthoDB" id="532561at2"/>
<dbReference type="Proteomes" id="UP000002483">
    <property type="component" value="Chromosome"/>
</dbReference>
<dbReference type="GO" id="GO:0031676">
    <property type="term" value="C:plasma membrane-derived thylakoid membrane"/>
    <property type="evidence" value="ECO:0007669"/>
    <property type="project" value="UniProtKB-SubCell"/>
</dbReference>
<dbReference type="GO" id="GO:0015979">
    <property type="term" value="P:photosynthesis"/>
    <property type="evidence" value="ECO:0007669"/>
    <property type="project" value="InterPro"/>
</dbReference>
<dbReference type="HAMAP" id="MF_00293">
    <property type="entry name" value="PSII_PsbN"/>
    <property type="match status" value="1"/>
</dbReference>
<dbReference type="InterPro" id="IPR003398">
    <property type="entry name" value="PSII_PsbN"/>
</dbReference>
<dbReference type="NCBIfam" id="NF009650">
    <property type="entry name" value="PRK13183.1"/>
    <property type="match status" value="1"/>
</dbReference>
<dbReference type="PANTHER" id="PTHR35326">
    <property type="entry name" value="PROTEIN PSBN"/>
    <property type="match status" value="1"/>
</dbReference>
<dbReference type="PANTHER" id="PTHR35326:SF3">
    <property type="entry name" value="PROTEIN PSBN"/>
    <property type="match status" value="1"/>
</dbReference>
<dbReference type="Pfam" id="PF02468">
    <property type="entry name" value="PsbN"/>
    <property type="match status" value="1"/>
</dbReference>
<organism>
    <name type="scientific">Nostoc sp. (strain PCC 7120 / SAG 25.82 / UTEX 2576)</name>
    <dbReference type="NCBI Taxonomy" id="103690"/>
    <lineage>
        <taxon>Bacteria</taxon>
        <taxon>Bacillati</taxon>
        <taxon>Cyanobacteriota</taxon>
        <taxon>Cyanophyceae</taxon>
        <taxon>Nostocales</taxon>
        <taxon>Nostocaceae</taxon>
        <taxon>Nostoc</taxon>
    </lineage>
</organism>